<comment type="function">
    <text evidence="1 3 4">Converts GTP to 7,8-dihydro-D-neopterin 2',3'-cyclic phosphate, the first intermediate in the biosynthesis of coenzyme methanopterin (By similarity). Involved in archaeosine (G(+)) and folate biosynthesis (PubMed:18931107, PubMed:19478918).</text>
</comment>
<comment type="catalytic activity">
    <reaction evidence="1">
        <text>GTP + H2O = 7,8-dihydroneopterin 2',3'-cyclic phosphate + formate + diphosphate + H(+)</text>
        <dbReference type="Rhea" id="RHEA:25860"/>
        <dbReference type="ChEBI" id="CHEBI:15377"/>
        <dbReference type="ChEBI" id="CHEBI:15378"/>
        <dbReference type="ChEBI" id="CHEBI:15740"/>
        <dbReference type="ChEBI" id="CHEBI:33019"/>
        <dbReference type="ChEBI" id="CHEBI:37565"/>
        <dbReference type="ChEBI" id="CHEBI:58854"/>
        <dbReference type="EC" id="3.5.4.39"/>
    </reaction>
</comment>
<comment type="cofactor">
    <cofactor evidence="1">
        <name>Fe(2+)</name>
        <dbReference type="ChEBI" id="CHEBI:29033"/>
    </cofactor>
    <text evidence="1">Binds 1 Fe(2+) ion per subunit.</text>
</comment>
<comment type="pathway">
    <text evidence="1">Cofactor biosynthesis; 5,6,7,8-tetrahydromethanopterin biosynthesis.</text>
</comment>
<comment type="subunit">
    <text evidence="1">Homodimer.</text>
</comment>
<comment type="disruption phenotype">
    <text evidence="3 4">Cells lacking this gene are auxotrophic for thymidine (dT) and hypoxanthine (PubMed:19478918). tRNAs of the mutants lack archaeosine (G(+)) (PubMed:18931107, PubMed:19478918). A slight growth defect is seen in mutants grown at 45 degrees Celsius in Hv-YPC (yeast-peptone-casamino acids) medium supplemented with dT (PubMed:18931107). Absence of pantothenate from the growth medium of the mutant cells results in a slow-growing phenotype (PubMed:19478918).</text>
</comment>
<comment type="similarity">
    <text evidence="1">Belongs to the GTP cyclohydrolase IV family.</text>
</comment>
<organism evidence="7">
    <name type="scientific">Haloferax volcanii (strain ATCC 29605 / DSM 3757 / JCM 8879 / NBRC 14742 / NCIMB 2012 / VKM B-1768 / DS2)</name>
    <name type="common">Halobacterium volcanii</name>
    <dbReference type="NCBI Taxonomy" id="309800"/>
    <lineage>
        <taxon>Archaea</taxon>
        <taxon>Methanobacteriati</taxon>
        <taxon>Methanobacteriota</taxon>
        <taxon>Stenosarchaea group</taxon>
        <taxon>Halobacteria</taxon>
        <taxon>Halobacteriales</taxon>
        <taxon>Haloferacaceae</taxon>
        <taxon>Haloferax</taxon>
    </lineage>
</organism>
<sequence length="308" mass="33516">MSHQLPDVQASQPDVTVGLSQVGVTGVEKLVKIARDGKRPLVLMAEFEVFVDLPGGRKGIDMSRNMQVIDEVLEAAVSEPAYRVEDMCGDAAERLLAKHEYTTTAEVSMTAELVVREDTPASGLSTQSTAEIIASATATDEGTREEIGAEVVGMTVCPCSQGMSASRARDVLQDLAVDDDTIEEFLDKVPQPGHSQRGHATLTVETQGSPEVDLMDLIDIARDSMSARIYNLAKRPDEDHMTYHAHANAKFVEDCVRSMAELSLEALDHLGDDAVVHMKQSNDESIHQHNAHAEREVTLGQLRDELDA</sequence>
<feature type="chain" id="PRO_0000454760" description="GTP cyclohydrolase MptA">
    <location>
        <begin position="1"/>
        <end position="308"/>
    </location>
</feature>
<feature type="region of interest" description="Disordered" evidence="2">
    <location>
        <begin position="282"/>
        <end position="308"/>
    </location>
</feature>
<feature type="site" description="May be catalytically important" evidence="1">
    <location>
        <position position="157"/>
    </location>
</feature>
<name>MPTA_HALVD</name>
<proteinExistence type="inferred from homology"/>
<accession>D4GWJ7</accession>
<accession>A0A384KI98</accession>
<accession>L9V735</accession>
<dbReference type="EC" id="3.5.4.39" evidence="1"/>
<dbReference type="EMBL" id="CP001956">
    <property type="protein sequence ID" value="ADE05034.1"/>
    <property type="molecule type" value="Genomic_DNA"/>
</dbReference>
<dbReference type="EMBL" id="AOHU01000044">
    <property type="protein sequence ID" value="ELY32791.1"/>
    <property type="molecule type" value="Genomic_DNA"/>
</dbReference>
<dbReference type="RefSeq" id="WP_004042238.1">
    <property type="nucleotide sequence ID" value="NC_013967.1"/>
</dbReference>
<dbReference type="SMR" id="D4GWJ7"/>
<dbReference type="IntAct" id="D4GWJ7">
    <property type="interactions" value="1"/>
</dbReference>
<dbReference type="STRING" id="309800.HVO_2348"/>
<dbReference type="PaxDb" id="309800-C498_07025"/>
<dbReference type="EnsemblBacteria" id="ADE05034">
    <property type="protein sequence ID" value="ADE05034"/>
    <property type="gene ID" value="HVO_2348"/>
</dbReference>
<dbReference type="GeneID" id="8924061"/>
<dbReference type="KEGG" id="hvo:HVO_2348"/>
<dbReference type="PATRIC" id="fig|309800.29.peg.1357"/>
<dbReference type="eggNOG" id="arCOG04301">
    <property type="taxonomic scope" value="Archaea"/>
</dbReference>
<dbReference type="HOGENOM" id="CLU_062816_1_0_2"/>
<dbReference type="OrthoDB" id="53087at2157"/>
<dbReference type="UniPathway" id="UPA00065"/>
<dbReference type="Proteomes" id="UP000008243">
    <property type="component" value="Chromosome"/>
</dbReference>
<dbReference type="Proteomes" id="UP000011532">
    <property type="component" value="Unassembled WGS sequence"/>
</dbReference>
<dbReference type="GO" id="GO:0003934">
    <property type="term" value="F:GTP cyclohydrolase I activity"/>
    <property type="evidence" value="ECO:0007669"/>
    <property type="project" value="InterPro"/>
</dbReference>
<dbReference type="GO" id="GO:0044682">
    <property type="term" value="F:GTP cyclohydrolase IV activity"/>
    <property type="evidence" value="ECO:0007669"/>
    <property type="project" value="UniProtKB-UniRule"/>
</dbReference>
<dbReference type="GO" id="GO:0005506">
    <property type="term" value="F:iron ion binding"/>
    <property type="evidence" value="ECO:0007669"/>
    <property type="project" value="UniProtKB-UniRule"/>
</dbReference>
<dbReference type="GO" id="GO:0002927">
    <property type="term" value="P:archaeosine-tRNA biosynthetic process"/>
    <property type="evidence" value="ECO:0000315"/>
    <property type="project" value="UniProtKB"/>
</dbReference>
<dbReference type="GO" id="GO:0046656">
    <property type="term" value="P:folic acid biosynthetic process"/>
    <property type="evidence" value="ECO:0000315"/>
    <property type="project" value="UniProtKB"/>
</dbReference>
<dbReference type="GO" id="GO:2001118">
    <property type="term" value="P:tetrahydromethanopterin biosynthetic process"/>
    <property type="evidence" value="ECO:0007669"/>
    <property type="project" value="UniProtKB-UniRule"/>
</dbReference>
<dbReference type="Gene3D" id="3.10.270.10">
    <property type="entry name" value="Urate Oxidase"/>
    <property type="match status" value="1"/>
</dbReference>
<dbReference type="HAMAP" id="MF_01527_A">
    <property type="entry name" value="GTP_cyclohydrol_A"/>
    <property type="match status" value="1"/>
</dbReference>
<dbReference type="InterPro" id="IPR003801">
    <property type="entry name" value="GTP_cyclohydrolase_FolE2/MptA"/>
</dbReference>
<dbReference type="InterPro" id="IPR022840">
    <property type="entry name" value="GTP_cyclohydrolase_MptA"/>
</dbReference>
<dbReference type="NCBIfam" id="TIGR00294">
    <property type="entry name" value="GTP cyclohydrolase MptA"/>
    <property type="match status" value="1"/>
</dbReference>
<dbReference type="PANTHER" id="PTHR36445">
    <property type="entry name" value="GTP CYCLOHYDROLASE MPTA"/>
    <property type="match status" value="1"/>
</dbReference>
<dbReference type="PANTHER" id="PTHR36445:SF1">
    <property type="entry name" value="GTP CYCLOHYDROLASE MPTA"/>
    <property type="match status" value="1"/>
</dbReference>
<dbReference type="Pfam" id="PF02649">
    <property type="entry name" value="GCHY-1"/>
    <property type="match status" value="1"/>
</dbReference>
<evidence type="ECO:0000255" key="1">
    <source>
        <dbReference type="HAMAP-Rule" id="MF_01527"/>
    </source>
</evidence>
<evidence type="ECO:0000256" key="2">
    <source>
        <dbReference type="SAM" id="MobiDB-lite"/>
    </source>
</evidence>
<evidence type="ECO:0000269" key="3">
    <source>
    </source>
</evidence>
<evidence type="ECO:0000269" key="4">
    <source>
    </source>
</evidence>
<evidence type="ECO:0000303" key="5">
    <source>
    </source>
</evidence>
<evidence type="ECO:0000303" key="6">
    <source>
    </source>
</evidence>
<evidence type="ECO:0000312" key="7">
    <source>
        <dbReference type="EMBL" id="ADE05034.1"/>
    </source>
</evidence>
<evidence type="ECO:0000312" key="8">
    <source>
        <dbReference type="EMBL" id="ELY32791.1"/>
    </source>
</evidence>
<evidence type="ECO:0000312" key="9">
    <source>
        <dbReference type="Proteomes" id="UP000008243"/>
    </source>
</evidence>
<evidence type="ECO:0000312" key="10">
    <source>
        <dbReference type="Proteomes" id="UP000011532"/>
    </source>
</evidence>
<reference evidence="7 9" key="1">
    <citation type="journal article" date="2010" name="PLoS ONE">
        <title>The complete genome sequence of Haloferax volcanii DS2, a model archaeon.</title>
        <authorList>
            <person name="Hartman A.L."/>
            <person name="Norais C."/>
            <person name="Badger J.H."/>
            <person name="Delmas S."/>
            <person name="Haldenby S."/>
            <person name="Madupu R."/>
            <person name="Robinson J."/>
            <person name="Khouri H."/>
            <person name="Ren Q."/>
            <person name="Lowe T.M."/>
            <person name="Maupin-Furlow J."/>
            <person name="Pohlschroder M."/>
            <person name="Daniels C."/>
            <person name="Pfeiffer F."/>
            <person name="Allers T."/>
            <person name="Eisen J.A."/>
        </authorList>
    </citation>
    <scope>NUCLEOTIDE SEQUENCE [LARGE SCALE GENOMIC DNA]</scope>
    <source>
        <strain evidence="9">ATCC 29605 / DSM 3757 / JCM 8879 / NBRC 14742 / NCIMB 2012 / VKM B-1768 / DS2</strain>
    </source>
</reference>
<reference evidence="8 10" key="2">
    <citation type="journal article" date="2014" name="PLoS Genet.">
        <title>Phylogenetically driven sequencing of extremely halophilic archaea reveals strategies for static and dynamic osmo-response.</title>
        <authorList>
            <person name="Becker E.A."/>
            <person name="Seitzer P.M."/>
            <person name="Tritt A."/>
            <person name="Larsen D."/>
            <person name="Krusor M."/>
            <person name="Yao A.I."/>
            <person name="Wu D."/>
            <person name="Madern D."/>
            <person name="Eisen J.A."/>
            <person name="Darling A.E."/>
            <person name="Facciotti M.T."/>
        </authorList>
    </citation>
    <scope>NUCLEOTIDE SEQUENCE [LARGE SCALE GENOMIC DNA]</scope>
    <source>
        <strain evidence="10">ATCC 29605 / DSM 3757 / JCM 8879 / NBRC 14742 / NCIMB 2012 / VKM B-1768 / DS2</strain>
    </source>
</reference>
<reference key="3">
    <citation type="journal article" date="2008" name="J. Bacteriol.">
        <title>Biosynthesis of 7-deazaguanosine-modified tRNA nucleosides: a new role for GTP cyclohydrolase I.</title>
        <authorList>
            <person name="Phillips G."/>
            <person name="El Yacoubi B."/>
            <person name="Lyons B."/>
            <person name="Alvarez S."/>
            <person name="Iwata-Reuyl D."/>
            <person name="de Crecy-Lagard V."/>
        </authorList>
    </citation>
    <scope>FUNCTION</scope>
    <scope>DISRUPTION PHENOTYPE</scope>
    <source>
        <strain evidence="5">DS2 / DS70</strain>
    </source>
</reference>
<reference key="4">
    <citation type="journal article" date="2009" name="Archaea">
        <title>A Gateway platform for functional genomics in Haloferax volcanii: deletion of three tRNA modification genes.</title>
        <authorList>
            <person name="El Yacoubi B."/>
            <person name="Phillips G."/>
            <person name="Blaby I.K."/>
            <person name="Haas C.E."/>
            <person name="Cruz Y."/>
            <person name="Greenberg J."/>
            <person name="de Crecy-Lagard V."/>
        </authorList>
    </citation>
    <scope>FUNCTION</scope>
    <scope>DISRUPTION PHENOTYPE</scope>
    <source>
        <strain evidence="6">DS2 / DS70</strain>
    </source>
</reference>
<protein>
    <recommendedName>
        <fullName evidence="1">GTP cyclohydrolase MptA</fullName>
        <ecNumber evidence="1">3.5.4.39</ecNumber>
    </recommendedName>
    <alternativeName>
        <fullName evidence="5 6">GTP cyclohydrolase I</fullName>
        <shortName evidence="5">GCYH-I</shortName>
    </alternativeName>
    <alternativeName>
        <fullName evidence="1">GTP cyclohydrolase IV</fullName>
    </alternativeName>
</protein>
<gene>
    <name evidence="1 7" type="primary">mptA</name>
    <name evidence="5 6 7" type="synonym">folE2</name>
    <name evidence="7" type="ordered locus">HVO_2348</name>
    <name evidence="8" type="ORF">C498_07025</name>
</gene>
<keyword id="KW-0289">Folate biosynthesis</keyword>
<keyword id="KW-0378">Hydrolase</keyword>
<keyword id="KW-0408">Iron</keyword>
<keyword id="KW-0479">Metal-binding</keyword>
<keyword id="KW-1185">Reference proteome</keyword>